<dbReference type="EC" id="3.1.1.29" evidence="1"/>
<dbReference type="EMBL" id="CP001463">
    <property type="protein sequence ID" value="ACS89503.1"/>
    <property type="molecule type" value="Genomic_DNA"/>
</dbReference>
<dbReference type="RefSeq" id="WP_015848723.1">
    <property type="nucleotide sequence ID" value="NC_012883.1"/>
</dbReference>
<dbReference type="SMR" id="C6A1K8"/>
<dbReference type="STRING" id="604354.TSIB_0437"/>
<dbReference type="GeneID" id="8095423"/>
<dbReference type="KEGG" id="tsi:TSIB_0437"/>
<dbReference type="eggNOG" id="arCOG04228">
    <property type="taxonomic scope" value="Archaea"/>
</dbReference>
<dbReference type="HOGENOM" id="CLU_073661_2_2_2"/>
<dbReference type="OrthoDB" id="6075at2157"/>
<dbReference type="Proteomes" id="UP000009079">
    <property type="component" value="Chromosome"/>
</dbReference>
<dbReference type="GO" id="GO:0005829">
    <property type="term" value="C:cytosol"/>
    <property type="evidence" value="ECO:0007669"/>
    <property type="project" value="TreeGrafter"/>
</dbReference>
<dbReference type="GO" id="GO:0004045">
    <property type="term" value="F:peptidyl-tRNA hydrolase activity"/>
    <property type="evidence" value="ECO:0007669"/>
    <property type="project" value="UniProtKB-UniRule"/>
</dbReference>
<dbReference type="GO" id="GO:0006412">
    <property type="term" value="P:translation"/>
    <property type="evidence" value="ECO:0007669"/>
    <property type="project" value="UniProtKB-UniRule"/>
</dbReference>
<dbReference type="CDD" id="cd02430">
    <property type="entry name" value="PTH2"/>
    <property type="match status" value="1"/>
</dbReference>
<dbReference type="FunFam" id="3.40.1490.10:FF:000001">
    <property type="entry name" value="Peptidyl-tRNA hydrolase 2"/>
    <property type="match status" value="1"/>
</dbReference>
<dbReference type="Gene3D" id="3.40.1490.10">
    <property type="entry name" value="Bit1"/>
    <property type="match status" value="1"/>
</dbReference>
<dbReference type="HAMAP" id="MF_00628">
    <property type="entry name" value="Pept_tRNA_hydro_arch"/>
    <property type="match status" value="1"/>
</dbReference>
<dbReference type="InterPro" id="IPR023476">
    <property type="entry name" value="Pep_tRNA_hydro_II_dom_sf"/>
</dbReference>
<dbReference type="InterPro" id="IPR034759">
    <property type="entry name" value="Pept_tRNA_hydro_arch"/>
</dbReference>
<dbReference type="InterPro" id="IPR002833">
    <property type="entry name" value="PTH2"/>
</dbReference>
<dbReference type="NCBIfam" id="TIGR00283">
    <property type="entry name" value="arch_pth2"/>
    <property type="match status" value="1"/>
</dbReference>
<dbReference type="NCBIfam" id="NF003314">
    <property type="entry name" value="PRK04322.1"/>
    <property type="match status" value="1"/>
</dbReference>
<dbReference type="PANTHER" id="PTHR12649">
    <property type="entry name" value="PEPTIDYL-TRNA HYDROLASE 2"/>
    <property type="match status" value="1"/>
</dbReference>
<dbReference type="PANTHER" id="PTHR12649:SF11">
    <property type="entry name" value="PEPTIDYL-TRNA HYDROLASE 2, MITOCHONDRIAL"/>
    <property type="match status" value="1"/>
</dbReference>
<dbReference type="Pfam" id="PF01981">
    <property type="entry name" value="PTH2"/>
    <property type="match status" value="1"/>
</dbReference>
<dbReference type="SUPFAM" id="SSF102462">
    <property type="entry name" value="Peptidyl-tRNA hydrolase II"/>
    <property type="match status" value="1"/>
</dbReference>
<evidence type="ECO:0000255" key="1">
    <source>
        <dbReference type="HAMAP-Rule" id="MF_00628"/>
    </source>
</evidence>
<organism>
    <name type="scientific">Thermococcus sibiricus (strain DSM 12597 / MM 739)</name>
    <dbReference type="NCBI Taxonomy" id="604354"/>
    <lineage>
        <taxon>Archaea</taxon>
        <taxon>Methanobacteriati</taxon>
        <taxon>Methanobacteriota</taxon>
        <taxon>Thermococci</taxon>
        <taxon>Thermococcales</taxon>
        <taxon>Thermococcaceae</taxon>
        <taxon>Thermococcus</taxon>
    </lineage>
</organism>
<feature type="chain" id="PRO_1000212320" description="Peptidyl-tRNA hydrolase">
    <location>
        <begin position="1"/>
        <end position="118"/>
    </location>
</feature>
<comment type="function">
    <text evidence="1">The natural substrate for this enzyme may be peptidyl-tRNAs which drop off the ribosome during protein synthesis.</text>
</comment>
<comment type="catalytic activity">
    <reaction evidence="1">
        <text>an N-acyl-L-alpha-aminoacyl-tRNA + H2O = an N-acyl-L-amino acid + a tRNA + H(+)</text>
        <dbReference type="Rhea" id="RHEA:54448"/>
        <dbReference type="Rhea" id="RHEA-COMP:10123"/>
        <dbReference type="Rhea" id="RHEA-COMP:13883"/>
        <dbReference type="ChEBI" id="CHEBI:15377"/>
        <dbReference type="ChEBI" id="CHEBI:15378"/>
        <dbReference type="ChEBI" id="CHEBI:59874"/>
        <dbReference type="ChEBI" id="CHEBI:78442"/>
        <dbReference type="ChEBI" id="CHEBI:138191"/>
        <dbReference type="EC" id="3.1.1.29"/>
    </reaction>
</comment>
<comment type="subcellular location">
    <subcellularLocation>
        <location evidence="1">Cytoplasm</location>
    </subcellularLocation>
</comment>
<comment type="similarity">
    <text evidence="1">Belongs to the PTH2 family.</text>
</comment>
<proteinExistence type="inferred from homology"/>
<protein>
    <recommendedName>
        <fullName evidence="1">Peptidyl-tRNA hydrolase</fullName>
        <shortName evidence="1">PTH</shortName>
        <ecNumber evidence="1">3.1.1.29</ecNumber>
    </recommendedName>
</protein>
<name>PTH_THESM</name>
<accession>C6A1K8</accession>
<reference key="1">
    <citation type="journal article" date="2009" name="Appl. Environ. Microbiol.">
        <title>Metabolic versatility and indigenous origin of the archaeon Thermococcus sibiricus, isolated from a siberian oil reservoir, as revealed by genome analysis.</title>
        <authorList>
            <person name="Mardanov A.V."/>
            <person name="Ravin N.V."/>
            <person name="Svetlitchnyi V.A."/>
            <person name="Beletsky A.V."/>
            <person name="Miroshnichenko M.L."/>
            <person name="Bonch-Osmolovskaya E.A."/>
            <person name="Skryabin K.G."/>
        </authorList>
    </citation>
    <scope>NUCLEOTIDE SEQUENCE [LARGE SCALE GENOMIC DNA]</scope>
    <source>
        <strain>DSM 12597 / MM 739</strain>
    </source>
</reference>
<gene>
    <name evidence="1" type="primary">pth</name>
    <name type="ordered locus">TSIB_0437</name>
</gene>
<keyword id="KW-0963">Cytoplasm</keyword>
<keyword id="KW-0378">Hydrolase</keyword>
<keyword id="KW-1185">Reference proteome</keyword>
<sequence length="118" mass="13025">MFKYKQVMIVRSDLKLSKGKLAVQVAHGAVTAAFKAYKEKPEWFKGWFNEGQKKVVVKAESERELFELKAEAEKLGIPNSLIRDAGLTEIPPGTITCLAIGPGPEEIVNKITGNLKLV</sequence>